<comment type="function">
    <text evidence="1">Part of the twin-arginine translocation (Tat) system that transports large folded proteins containing a characteristic twin-arginine motif in their signal peptide across membranes. TatA could form the protein-conducting channel of the Tat system.</text>
</comment>
<comment type="subunit">
    <text evidence="1">Forms a complex with TatC.</text>
</comment>
<comment type="subcellular location">
    <subcellularLocation>
        <location evidence="1">Cell inner membrane</location>
        <topology evidence="1">Single-pass membrane protein</topology>
    </subcellularLocation>
</comment>
<comment type="similarity">
    <text evidence="1">Belongs to the TatA/E family.</text>
</comment>
<sequence length="69" mass="7621">MFGLGGQELILILLIILLLFGAKKLPELARGLGKGMKEFKKAQTEIEEEFNSVVDEKPKKEKTASSTQS</sequence>
<feature type="chain" id="PRO_1000197890" description="Sec-independent protein translocase protein TatA">
    <location>
        <begin position="1"/>
        <end position="69"/>
    </location>
</feature>
<feature type="transmembrane region" description="Helical" evidence="1">
    <location>
        <begin position="1"/>
        <end position="21"/>
    </location>
</feature>
<protein>
    <recommendedName>
        <fullName evidence="1">Sec-independent protein translocase protein TatA</fullName>
    </recommendedName>
</protein>
<proteinExistence type="inferred from homology"/>
<reference key="1">
    <citation type="submission" date="2008-06" db="EMBL/GenBank/DDBJ databases">
        <title>Complete sequence of Pelodictyon phaeoclathratiforme BU-1.</title>
        <authorList>
            <consortium name="US DOE Joint Genome Institute"/>
            <person name="Lucas S."/>
            <person name="Copeland A."/>
            <person name="Lapidus A."/>
            <person name="Glavina del Rio T."/>
            <person name="Dalin E."/>
            <person name="Tice H."/>
            <person name="Bruce D."/>
            <person name="Goodwin L."/>
            <person name="Pitluck S."/>
            <person name="Schmutz J."/>
            <person name="Larimer F."/>
            <person name="Land M."/>
            <person name="Hauser L."/>
            <person name="Kyrpides N."/>
            <person name="Mikhailova N."/>
            <person name="Liu Z."/>
            <person name="Li T."/>
            <person name="Zhao F."/>
            <person name="Overmann J."/>
            <person name="Bryant D.A."/>
            <person name="Richardson P."/>
        </authorList>
    </citation>
    <scope>NUCLEOTIDE SEQUENCE [LARGE SCALE GENOMIC DNA]</scope>
    <source>
        <strain>DSM 5477 / BU-1</strain>
    </source>
</reference>
<evidence type="ECO:0000255" key="1">
    <source>
        <dbReference type="HAMAP-Rule" id="MF_00236"/>
    </source>
</evidence>
<accession>B4SE06</accession>
<gene>
    <name evidence="1" type="primary">tatA</name>
    <name type="ordered locus">Ppha_0702</name>
</gene>
<organism>
    <name type="scientific">Pelodictyon phaeoclathratiforme (strain DSM 5477 / BU-1)</name>
    <dbReference type="NCBI Taxonomy" id="324925"/>
    <lineage>
        <taxon>Bacteria</taxon>
        <taxon>Pseudomonadati</taxon>
        <taxon>Chlorobiota</taxon>
        <taxon>Chlorobiia</taxon>
        <taxon>Chlorobiales</taxon>
        <taxon>Chlorobiaceae</taxon>
        <taxon>Chlorobium/Pelodictyon group</taxon>
        <taxon>Pelodictyon</taxon>
    </lineage>
</organism>
<name>TATA_PELPB</name>
<dbReference type="EMBL" id="CP001110">
    <property type="protein sequence ID" value="ACF42997.1"/>
    <property type="molecule type" value="Genomic_DNA"/>
</dbReference>
<dbReference type="RefSeq" id="WP_012507492.1">
    <property type="nucleotide sequence ID" value="NC_011060.1"/>
</dbReference>
<dbReference type="SMR" id="B4SE06"/>
<dbReference type="STRING" id="324925.Ppha_0702"/>
<dbReference type="KEGG" id="pph:Ppha_0702"/>
<dbReference type="eggNOG" id="COG1826">
    <property type="taxonomic scope" value="Bacteria"/>
</dbReference>
<dbReference type="HOGENOM" id="CLU_086034_6_2_10"/>
<dbReference type="OrthoDB" id="9812812at2"/>
<dbReference type="Proteomes" id="UP000002724">
    <property type="component" value="Chromosome"/>
</dbReference>
<dbReference type="GO" id="GO:0033281">
    <property type="term" value="C:TAT protein transport complex"/>
    <property type="evidence" value="ECO:0007669"/>
    <property type="project" value="UniProtKB-UniRule"/>
</dbReference>
<dbReference type="GO" id="GO:0008320">
    <property type="term" value="F:protein transmembrane transporter activity"/>
    <property type="evidence" value="ECO:0007669"/>
    <property type="project" value="UniProtKB-UniRule"/>
</dbReference>
<dbReference type="GO" id="GO:0043953">
    <property type="term" value="P:protein transport by the Tat complex"/>
    <property type="evidence" value="ECO:0007669"/>
    <property type="project" value="UniProtKB-UniRule"/>
</dbReference>
<dbReference type="Gene3D" id="1.20.5.3310">
    <property type="match status" value="1"/>
</dbReference>
<dbReference type="HAMAP" id="MF_00236">
    <property type="entry name" value="TatA_E"/>
    <property type="match status" value="1"/>
</dbReference>
<dbReference type="InterPro" id="IPR003369">
    <property type="entry name" value="TatA/B/E"/>
</dbReference>
<dbReference type="InterPro" id="IPR006312">
    <property type="entry name" value="TatA/E"/>
</dbReference>
<dbReference type="NCBIfam" id="TIGR01411">
    <property type="entry name" value="tatAE"/>
    <property type="match status" value="1"/>
</dbReference>
<dbReference type="PANTHER" id="PTHR42982">
    <property type="entry name" value="SEC-INDEPENDENT PROTEIN TRANSLOCASE PROTEIN TATA"/>
    <property type="match status" value="1"/>
</dbReference>
<dbReference type="PANTHER" id="PTHR42982:SF1">
    <property type="entry name" value="SEC-INDEPENDENT PROTEIN TRANSLOCASE PROTEIN TATA"/>
    <property type="match status" value="1"/>
</dbReference>
<dbReference type="Pfam" id="PF02416">
    <property type="entry name" value="TatA_B_E"/>
    <property type="match status" value="1"/>
</dbReference>
<dbReference type="PRINTS" id="PR01506">
    <property type="entry name" value="TATBPROTEIN"/>
</dbReference>
<keyword id="KW-0997">Cell inner membrane</keyword>
<keyword id="KW-1003">Cell membrane</keyword>
<keyword id="KW-0472">Membrane</keyword>
<keyword id="KW-0653">Protein transport</keyword>
<keyword id="KW-1185">Reference proteome</keyword>
<keyword id="KW-0811">Translocation</keyword>
<keyword id="KW-0812">Transmembrane</keyword>
<keyword id="KW-1133">Transmembrane helix</keyword>
<keyword id="KW-0813">Transport</keyword>